<protein>
    <recommendedName>
        <fullName evidence="5">Calcium-binding protein TgpCaBP</fullName>
    </recommendedName>
</protein>
<accession>A0A7J6K452</accession>
<feature type="chain" id="PRO_0000461872" description="Calcium-binding protein TgpCaBP">
    <location>
        <begin position="1"/>
        <end position="335"/>
    </location>
</feature>
<feature type="transmembrane region" description="Helical" evidence="1">
    <location>
        <begin position="30"/>
        <end position="50"/>
    </location>
</feature>
<feature type="domain" description="EF-hand 1" evidence="2">
    <location>
        <begin position="113"/>
        <end position="148"/>
    </location>
</feature>
<feature type="domain" description="EF-hand 2" evidence="2">
    <location>
        <begin position="153"/>
        <end position="188"/>
    </location>
</feature>
<feature type="domain" description="EF-hand 3" evidence="2">
    <location>
        <begin position="190"/>
        <end position="225"/>
    </location>
</feature>
<feature type="domain" description="EF-hand 4" evidence="2">
    <location>
        <begin position="227"/>
        <end position="262"/>
    </location>
</feature>
<feature type="short sequence motif" description="Prevents secretion from ER" evidence="3">
    <location>
        <begin position="332"/>
        <end position="335"/>
    </location>
</feature>
<feature type="binding site" evidence="2">
    <location>
        <position position="126"/>
    </location>
    <ligand>
        <name>Ca(2+)</name>
        <dbReference type="ChEBI" id="CHEBI:29108"/>
        <label>1</label>
    </ligand>
</feature>
<feature type="binding site" evidence="2">
    <location>
        <position position="128"/>
    </location>
    <ligand>
        <name>Ca(2+)</name>
        <dbReference type="ChEBI" id="CHEBI:29108"/>
        <label>1</label>
    </ligand>
</feature>
<feature type="binding site" evidence="2">
    <location>
        <position position="130"/>
    </location>
    <ligand>
        <name>Ca(2+)</name>
        <dbReference type="ChEBI" id="CHEBI:29108"/>
        <label>1</label>
    </ligand>
</feature>
<feature type="binding site" evidence="2">
    <location>
        <position position="132"/>
    </location>
    <ligand>
        <name>Ca(2+)</name>
        <dbReference type="ChEBI" id="CHEBI:29108"/>
        <label>1</label>
    </ligand>
</feature>
<feature type="binding site" evidence="2">
    <location>
        <position position="137"/>
    </location>
    <ligand>
        <name>Ca(2+)</name>
        <dbReference type="ChEBI" id="CHEBI:29108"/>
        <label>1</label>
    </ligand>
</feature>
<feature type="binding site" evidence="2">
    <location>
        <position position="166"/>
    </location>
    <ligand>
        <name>Ca(2+)</name>
        <dbReference type="ChEBI" id="CHEBI:29108"/>
        <label>2</label>
    </ligand>
</feature>
<feature type="binding site" evidence="2">
    <location>
        <position position="168"/>
    </location>
    <ligand>
        <name>Ca(2+)</name>
        <dbReference type="ChEBI" id="CHEBI:29108"/>
        <label>2</label>
    </ligand>
</feature>
<feature type="binding site" evidence="2">
    <location>
        <position position="170"/>
    </location>
    <ligand>
        <name>Ca(2+)</name>
        <dbReference type="ChEBI" id="CHEBI:29108"/>
        <label>2</label>
    </ligand>
</feature>
<feature type="binding site" evidence="2">
    <location>
        <position position="177"/>
    </location>
    <ligand>
        <name>Ca(2+)</name>
        <dbReference type="ChEBI" id="CHEBI:29108"/>
        <label>2</label>
    </ligand>
</feature>
<feature type="binding site" evidence="2">
    <location>
        <position position="203"/>
    </location>
    <ligand>
        <name>Ca(2+)</name>
        <dbReference type="ChEBI" id="CHEBI:29108"/>
        <label>3</label>
    </ligand>
</feature>
<feature type="binding site" evidence="2">
    <location>
        <position position="205"/>
    </location>
    <ligand>
        <name>Ca(2+)</name>
        <dbReference type="ChEBI" id="CHEBI:29108"/>
        <label>3</label>
    </ligand>
</feature>
<feature type="binding site" evidence="2">
    <location>
        <position position="207"/>
    </location>
    <ligand>
        <name>Ca(2+)</name>
        <dbReference type="ChEBI" id="CHEBI:29108"/>
        <label>3</label>
    </ligand>
</feature>
<feature type="binding site" evidence="2">
    <location>
        <position position="209"/>
    </location>
    <ligand>
        <name>Ca(2+)</name>
        <dbReference type="ChEBI" id="CHEBI:29108"/>
        <label>3</label>
    </ligand>
</feature>
<feature type="binding site" evidence="2">
    <location>
        <position position="214"/>
    </location>
    <ligand>
        <name>Ca(2+)</name>
        <dbReference type="ChEBI" id="CHEBI:29108"/>
        <label>3</label>
    </ligand>
</feature>
<feature type="binding site" evidence="2">
    <location>
        <position position="240"/>
    </location>
    <ligand>
        <name>Ca(2+)</name>
        <dbReference type="ChEBI" id="CHEBI:29108"/>
        <label>4</label>
    </ligand>
</feature>
<feature type="binding site" evidence="2">
    <location>
        <position position="242"/>
    </location>
    <ligand>
        <name>Ca(2+)</name>
        <dbReference type="ChEBI" id="CHEBI:29108"/>
        <label>4</label>
    </ligand>
</feature>
<feature type="binding site" evidence="2">
    <location>
        <position position="244"/>
    </location>
    <ligand>
        <name>Ca(2+)</name>
        <dbReference type="ChEBI" id="CHEBI:29108"/>
        <label>4</label>
    </ligand>
</feature>
<feature type="binding site" evidence="2">
    <location>
        <position position="251"/>
    </location>
    <ligand>
        <name>Ca(2+)</name>
        <dbReference type="ChEBI" id="CHEBI:29108"/>
        <label>4</label>
    </ligand>
</feature>
<dbReference type="EMBL" id="JAAUHK010000194">
    <property type="protein sequence ID" value="KAF4641609.1"/>
    <property type="molecule type" value="Genomic_DNA"/>
</dbReference>
<dbReference type="SMR" id="A0A7J6K452"/>
<dbReference type="VEuPathDB" id="ToxoDB:TGME49_229480"/>
<dbReference type="Proteomes" id="UP000557509">
    <property type="component" value="Unassembled WGS sequence"/>
</dbReference>
<dbReference type="GO" id="GO:0005829">
    <property type="term" value="C:cytosol"/>
    <property type="evidence" value="ECO:0007669"/>
    <property type="project" value="UniProtKB-SubCell"/>
</dbReference>
<dbReference type="GO" id="GO:0005789">
    <property type="term" value="C:endoplasmic reticulum membrane"/>
    <property type="evidence" value="ECO:0007669"/>
    <property type="project" value="UniProtKB-SubCell"/>
</dbReference>
<dbReference type="GO" id="GO:0005509">
    <property type="term" value="F:calcium ion binding"/>
    <property type="evidence" value="ECO:0007669"/>
    <property type="project" value="InterPro"/>
</dbReference>
<dbReference type="Gene3D" id="1.10.238.10">
    <property type="entry name" value="EF-hand"/>
    <property type="match status" value="3"/>
</dbReference>
<dbReference type="InterPro" id="IPR011992">
    <property type="entry name" value="EF-hand-dom_pair"/>
</dbReference>
<dbReference type="InterPro" id="IPR018247">
    <property type="entry name" value="EF_Hand_1_Ca_BS"/>
</dbReference>
<dbReference type="InterPro" id="IPR002048">
    <property type="entry name" value="EF_hand_dom"/>
</dbReference>
<dbReference type="PANTHER" id="PTHR10827:SF85">
    <property type="entry name" value="CALCIUM-BINDING PROTEIN"/>
    <property type="match status" value="1"/>
</dbReference>
<dbReference type="PANTHER" id="PTHR10827">
    <property type="entry name" value="RETICULOCALBIN"/>
    <property type="match status" value="1"/>
</dbReference>
<dbReference type="Pfam" id="PF13202">
    <property type="entry name" value="EF-hand_5"/>
    <property type="match status" value="1"/>
</dbReference>
<dbReference type="Pfam" id="PF13499">
    <property type="entry name" value="EF-hand_7"/>
    <property type="match status" value="2"/>
</dbReference>
<dbReference type="SMART" id="SM00054">
    <property type="entry name" value="EFh"/>
    <property type="match status" value="5"/>
</dbReference>
<dbReference type="SUPFAM" id="SSF47473">
    <property type="entry name" value="EF-hand"/>
    <property type="match status" value="2"/>
</dbReference>
<dbReference type="PROSITE" id="PS00018">
    <property type="entry name" value="EF_HAND_1"/>
    <property type="match status" value="4"/>
</dbReference>
<dbReference type="PROSITE" id="PS50222">
    <property type="entry name" value="EF_HAND_2"/>
    <property type="match status" value="4"/>
</dbReference>
<keyword id="KW-0106">Calcium</keyword>
<keyword id="KW-0963">Cytoplasm</keyword>
<keyword id="KW-0256">Endoplasmic reticulum</keyword>
<keyword id="KW-0472">Membrane</keyword>
<keyword id="KW-1185">Reference proteome</keyword>
<keyword id="KW-0677">Repeat</keyword>
<keyword id="KW-0812">Transmembrane</keyword>
<keyword id="KW-1133">Transmembrane helix</keyword>
<name>CABP_TOXGO</name>
<evidence type="ECO:0000255" key="1"/>
<evidence type="ECO:0000255" key="2">
    <source>
        <dbReference type="PROSITE-ProRule" id="PRU00448"/>
    </source>
</evidence>
<evidence type="ECO:0000255" key="3">
    <source>
        <dbReference type="PROSITE-ProRule" id="PRU10138"/>
    </source>
</evidence>
<evidence type="ECO:0000269" key="4">
    <source>
    </source>
</evidence>
<evidence type="ECO:0000303" key="5">
    <source ref="1"/>
</evidence>
<evidence type="ECO:0000305" key="6"/>
<evidence type="ECO:0000312" key="7">
    <source>
        <dbReference type="EMBL" id="KAF4641609.1"/>
    </source>
</evidence>
<evidence type="ECO:0000312" key="8">
    <source>
        <dbReference type="Proteomes" id="UP000557509"/>
    </source>
</evidence>
<comment type="function">
    <text evidence="4">Calcium-binding protein (PubMed:39162521). Participates in the efflux of intracellular Ca(2+) and storage of Ca(2+) in the endoplasmic reticulum (PubMed:39162521). Required for gliding, host cell invasion and egress (PubMed:39162521). Required for microneme secretion (PubMed:39162521).</text>
</comment>
<comment type="subcellular location">
    <subcellularLocation>
        <location evidence="4">Endoplasmic reticulum membrane</location>
        <topology evidence="1">Single-pass membrane protein</topology>
    </subcellularLocation>
    <subcellularLocation>
        <location evidence="4">Cytoplasm</location>
        <location evidence="4">Cytosol</location>
    </subcellularLocation>
</comment>
<comment type="disruption phenotype">
    <text evidence="4">Gene knockout results in slower parasite proliferation represented by the formation of smaller plaques compared to their parental counterparts (PubMed:39162521). Lower invasion capability (PubMed:39162521). Longer duration before egress from the host cells (PubMed:39162521). Reduced parasite gliding motility and average trail length (PubMed:39162521). Reduced virulence in mice (PubMed:39162521). Loss of the regulatory ability of Ca(2+) efflux (PubMed:39162521). Impaired Ca(2+) storage in endoplasmic reticulum (PubMed:39162521). Impaired microneme secretion (PubMed:39162521). No significant differences in in vitro replication (PubMed:39162521).</text>
</comment>
<gene>
    <name evidence="7" type="ORF">TGRH88_074190</name>
</gene>
<organism evidence="8">
    <name type="scientific">Toxoplasma gondii</name>
    <dbReference type="NCBI Taxonomy" id="5811"/>
    <lineage>
        <taxon>Eukaryota</taxon>
        <taxon>Sar</taxon>
        <taxon>Alveolata</taxon>
        <taxon>Apicomplexa</taxon>
        <taxon>Conoidasida</taxon>
        <taxon>Coccidia</taxon>
        <taxon>Eucoccidiorida</taxon>
        <taxon>Eimeriorina</taxon>
        <taxon>Sarcocystidae</taxon>
        <taxon>Toxoplasma</taxon>
    </lineage>
</organism>
<sequence>MAAFADRPTCRVSLGAVFLARELHRLRKSLPLCVFSLFLFSFAFSALSGAPSQFAEAAMPKLSGEKLAELMQMDVKDIKERMLALFDLIDTNQDNTIDTEEAKEWSAKLKNAMHQHQVRMEFQAIDKDNDGKVSLSELEATYVDSLDQKQLEQHKKEVEQRFKTVDKDNDGLLDLSEIRILMDPGKDEGLMKIEIEEILNAQDKNGDRKITVTEFIETEGTGSLNDVEKTELEKEFKSYDLNADGAIDVEELQQIIKDPHSHEIRMLLEEFTKDLKDGKVGREQWEKEFESFAVSMLTDNGEVLRFPEDYSGIEFPFKTAVPQVDVDDEDKHDEL</sequence>
<proteinExistence type="inferred from homology"/>
<reference evidence="8" key="1">
    <citation type="submission" date="2020-03" db="EMBL/GenBank/DDBJ databases">
        <title>Genome sequence of Toxoplasma gondii RH-88 strain.</title>
        <authorList>
            <person name="Lorenzi H.A."/>
            <person name="Venepally P."/>
            <person name="Rozenberg A."/>
            <person name="Sibley D."/>
        </authorList>
    </citation>
    <scope>NUCLEOTIDE SEQUENCE [LARGE SCALE GENOMIC DNA]</scope>
    <source>
        <strain evidence="8">RH-88</strain>
    </source>
</reference>
<reference evidence="6" key="2">
    <citation type="journal article" date="2024" name="Microbiol. Spectr.">
        <title>Calcium-binding protein TgpCaBP regulates calcium storage of the zoonotic parasite Toxoplasma gondii.</title>
        <authorList>
            <person name="Sun W."/>
            <person name="Jiang N."/>
            <person name="Li Q."/>
            <person name="Liu Y."/>
            <person name="Zhang Y."/>
            <person name="Chen R."/>
            <person name="Feng Y."/>
            <person name="Sang X."/>
            <person name="Long S."/>
            <person name="Chen Q."/>
        </authorList>
    </citation>
    <scope>FUNCTION</scope>
    <scope>SUBCELLULAR LOCATION</scope>
    <scope>DISRUPTION PHENOTYPE</scope>
</reference>